<proteinExistence type="inferred from homology"/>
<reference key="1">
    <citation type="journal article" date="2005" name="J. Bacteriol.">
        <title>Complete genome sequence and analysis of the multiresistant nosocomial pathogen Corynebacterium jeikeium K411, a lipid-requiring bacterium of the human skin flora.</title>
        <authorList>
            <person name="Tauch A."/>
            <person name="Kaiser O."/>
            <person name="Hain T."/>
            <person name="Goesmann A."/>
            <person name="Weisshaar B."/>
            <person name="Albersmeier A."/>
            <person name="Bekel T."/>
            <person name="Bischoff N."/>
            <person name="Brune I."/>
            <person name="Chakraborty T."/>
            <person name="Kalinowski J."/>
            <person name="Meyer F."/>
            <person name="Rupp O."/>
            <person name="Schneiker S."/>
            <person name="Viehoever P."/>
            <person name="Puehler A."/>
        </authorList>
    </citation>
    <scope>NUCLEOTIDE SEQUENCE [LARGE SCALE GENOMIC DNA]</scope>
    <source>
        <strain>K411</strain>
    </source>
</reference>
<sequence>MSRVGKAPVAVPSGVTININGQSVEVKGPKGTLSQDIPAPITVAQEGEELVVSRPDDHRKNRSLHGLSRSLVFNMIEGVTKGYTINMEIFGVGYRVQLKGKNLEFALGYSHPVLIEAPEGITFAVDGNTKFSIAGIDKQQVGQIAANIRRLRKDDPYKGKGIRYEGEQVRRKVGKTGK</sequence>
<gene>
    <name evidence="1" type="primary">rplF</name>
    <name type="ordered locus">jk1796</name>
</gene>
<keyword id="KW-1185">Reference proteome</keyword>
<keyword id="KW-0687">Ribonucleoprotein</keyword>
<keyword id="KW-0689">Ribosomal protein</keyword>
<keyword id="KW-0694">RNA-binding</keyword>
<keyword id="KW-0699">rRNA-binding</keyword>
<evidence type="ECO:0000255" key="1">
    <source>
        <dbReference type="HAMAP-Rule" id="MF_01365"/>
    </source>
</evidence>
<evidence type="ECO:0000305" key="2"/>
<dbReference type="EMBL" id="CR931997">
    <property type="protein sequence ID" value="CAI37973.1"/>
    <property type="molecule type" value="Genomic_DNA"/>
</dbReference>
<dbReference type="RefSeq" id="WP_011274136.1">
    <property type="nucleotide sequence ID" value="NC_007164.1"/>
</dbReference>
<dbReference type="SMR" id="Q4JT84"/>
<dbReference type="STRING" id="306537.jk1796"/>
<dbReference type="KEGG" id="cjk:jk1796"/>
<dbReference type="PATRIC" id="fig|306537.10.peg.1821"/>
<dbReference type="eggNOG" id="COG0097">
    <property type="taxonomic scope" value="Bacteria"/>
</dbReference>
<dbReference type="HOGENOM" id="CLU_065464_1_2_11"/>
<dbReference type="OrthoDB" id="9805007at2"/>
<dbReference type="Proteomes" id="UP000000545">
    <property type="component" value="Chromosome"/>
</dbReference>
<dbReference type="GO" id="GO:0022625">
    <property type="term" value="C:cytosolic large ribosomal subunit"/>
    <property type="evidence" value="ECO:0007669"/>
    <property type="project" value="TreeGrafter"/>
</dbReference>
<dbReference type="GO" id="GO:0019843">
    <property type="term" value="F:rRNA binding"/>
    <property type="evidence" value="ECO:0007669"/>
    <property type="project" value="UniProtKB-UniRule"/>
</dbReference>
<dbReference type="GO" id="GO:0003735">
    <property type="term" value="F:structural constituent of ribosome"/>
    <property type="evidence" value="ECO:0007669"/>
    <property type="project" value="InterPro"/>
</dbReference>
<dbReference type="GO" id="GO:0002181">
    <property type="term" value="P:cytoplasmic translation"/>
    <property type="evidence" value="ECO:0007669"/>
    <property type="project" value="TreeGrafter"/>
</dbReference>
<dbReference type="FunFam" id="3.90.930.12:FF:000001">
    <property type="entry name" value="50S ribosomal protein L6"/>
    <property type="match status" value="1"/>
</dbReference>
<dbReference type="FunFam" id="3.90.930.12:FF:000002">
    <property type="entry name" value="50S ribosomal protein L6"/>
    <property type="match status" value="1"/>
</dbReference>
<dbReference type="Gene3D" id="3.90.930.12">
    <property type="entry name" value="Ribosomal protein L6, alpha-beta domain"/>
    <property type="match status" value="2"/>
</dbReference>
<dbReference type="HAMAP" id="MF_01365_B">
    <property type="entry name" value="Ribosomal_uL6_B"/>
    <property type="match status" value="1"/>
</dbReference>
<dbReference type="InterPro" id="IPR000702">
    <property type="entry name" value="Ribosomal_uL6-like"/>
</dbReference>
<dbReference type="InterPro" id="IPR036789">
    <property type="entry name" value="Ribosomal_uL6-like_a/b-dom_sf"/>
</dbReference>
<dbReference type="InterPro" id="IPR020040">
    <property type="entry name" value="Ribosomal_uL6_a/b-dom"/>
</dbReference>
<dbReference type="InterPro" id="IPR019906">
    <property type="entry name" value="Ribosomal_uL6_bac-type"/>
</dbReference>
<dbReference type="NCBIfam" id="TIGR03654">
    <property type="entry name" value="L6_bact"/>
    <property type="match status" value="1"/>
</dbReference>
<dbReference type="PANTHER" id="PTHR11655">
    <property type="entry name" value="60S/50S RIBOSOMAL PROTEIN L6/L9"/>
    <property type="match status" value="1"/>
</dbReference>
<dbReference type="PANTHER" id="PTHR11655:SF14">
    <property type="entry name" value="LARGE RIBOSOMAL SUBUNIT PROTEIN UL6M"/>
    <property type="match status" value="1"/>
</dbReference>
<dbReference type="Pfam" id="PF00347">
    <property type="entry name" value="Ribosomal_L6"/>
    <property type="match status" value="2"/>
</dbReference>
<dbReference type="PIRSF" id="PIRSF002162">
    <property type="entry name" value="Ribosomal_L6"/>
    <property type="match status" value="1"/>
</dbReference>
<dbReference type="PRINTS" id="PR00059">
    <property type="entry name" value="RIBOSOMALL6"/>
</dbReference>
<dbReference type="SUPFAM" id="SSF56053">
    <property type="entry name" value="Ribosomal protein L6"/>
    <property type="match status" value="2"/>
</dbReference>
<organism>
    <name type="scientific">Corynebacterium jeikeium (strain K411)</name>
    <dbReference type="NCBI Taxonomy" id="306537"/>
    <lineage>
        <taxon>Bacteria</taxon>
        <taxon>Bacillati</taxon>
        <taxon>Actinomycetota</taxon>
        <taxon>Actinomycetes</taxon>
        <taxon>Mycobacteriales</taxon>
        <taxon>Corynebacteriaceae</taxon>
        <taxon>Corynebacterium</taxon>
    </lineage>
</organism>
<accession>Q4JT84</accession>
<name>RL6_CORJK</name>
<protein>
    <recommendedName>
        <fullName evidence="1">Large ribosomal subunit protein uL6</fullName>
    </recommendedName>
    <alternativeName>
        <fullName evidence="2">50S ribosomal protein L6</fullName>
    </alternativeName>
</protein>
<feature type="chain" id="PRO_0000260858" description="Large ribosomal subunit protein uL6">
    <location>
        <begin position="1"/>
        <end position="178"/>
    </location>
</feature>
<comment type="function">
    <text evidence="1">This protein binds to the 23S rRNA, and is important in its secondary structure. It is located near the subunit interface in the base of the L7/L12 stalk, and near the tRNA binding site of the peptidyltransferase center.</text>
</comment>
<comment type="subunit">
    <text evidence="1">Part of the 50S ribosomal subunit.</text>
</comment>
<comment type="similarity">
    <text evidence="1">Belongs to the universal ribosomal protein uL6 family.</text>
</comment>